<sequence>MTSQVNAVPTDSLAARLARPELLSLEPYQSARRIGGSGEIWVNANESPFNRTGIDGANRYPECQPPGLIAAYAAYAGVAAHELVCGRGADEAIELLIRTFCVPGQDSIGIFSPTYGMYAISAATFNVAVNTLPLAEDFSLPDDISALTGSKLVFVCNPNNPTGTLLPLGEIARVAKTFPNALVVVDEAYIEFAHNADGSPAQSATSLMAEFENLVILRTLSKAFGLAGARCGFLLAKPSVCELVMRVIAPYPVPVPVSVIAEKALSVMGIAQMRADVVLLNKQGARLALALTEAGLSVLPSGGNYVLAFSNDVEVLARALTKAGIVARRYSHPRLKDAIRISYASEQQTDSIIEAIGRIDSK</sequence>
<comment type="catalytic activity">
    <reaction evidence="1">
        <text>L-histidinol phosphate + 2-oxoglutarate = 3-(imidazol-4-yl)-2-oxopropyl phosphate + L-glutamate</text>
        <dbReference type="Rhea" id="RHEA:23744"/>
        <dbReference type="ChEBI" id="CHEBI:16810"/>
        <dbReference type="ChEBI" id="CHEBI:29985"/>
        <dbReference type="ChEBI" id="CHEBI:57766"/>
        <dbReference type="ChEBI" id="CHEBI:57980"/>
        <dbReference type="EC" id="2.6.1.9"/>
    </reaction>
</comment>
<comment type="cofactor">
    <cofactor evidence="1">
        <name>pyridoxal 5'-phosphate</name>
        <dbReference type="ChEBI" id="CHEBI:597326"/>
    </cofactor>
</comment>
<comment type="pathway">
    <text evidence="1">Amino-acid biosynthesis; L-histidine biosynthesis; L-histidine from 5-phospho-alpha-D-ribose 1-diphosphate: step 7/9.</text>
</comment>
<comment type="subunit">
    <text evidence="1">Homodimer.</text>
</comment>
<comment type="similarity">
    <text evidence="1">Belongs to the class-II pyridoxal-phosphate-dependent aminotransferase family. Histidinol-phosphate aminotransferase subfamily.</text>
</comment>
<reference key="1">
    <citation type="submission" date="2006-12" db="EMBL/GenBank/DDBJ databases">
        <title>Complete sequence of Shewanella amazonensis SB2B.</title>
        <authorList>
            <consortium name="US DOE Joint Genome Institute"/>
            <person name="Copeland A."/>
            <person name="Lucas S."/>
            <person name="Lapidus A."/>
            <person name="Barry K."/>
            <person name="Detter J.C."/>
            <person name="Glavina del Rio T."/>
            <person name="Hammon N."/>
            <person name="Israni S."/>
            <person name="Dalin E."/>
            <person name="Tice H."/>
            <person name="Pitluck S."/>
            <person name="Munk A.C."/>
            <person name="Brettin T."/>
            <person name="Bruce D."/>
            <person name="Han C."/>
            <person name="Tapia R."/>
            <person name="Gilna P."/>
            <person name="Schmutz J."/>
            <person name="Larimer F."/>
            <person name="Land M."/>
            <person name="Hauser L."/>
            <person name="Kyrpides N."/>
            <person name="Mikhailova N."/>
            <person name="Fredrickson J."/>
            <person name="Richardson P."/>
        </authorList>
    </citation>
    <scope>NUCLEOTIDE SEQUENCE [LARGE SCALE GENOMIC DNA]</scope>
    <source>
        <strain>ATCC BAA-1098 / SB2B</strain>
    </source>
</reference>
<gene>
    <name evidence="1" type="primary">hisC</name>
    <name type="ordered locus">Sama_1943</name>
</gene>
<proteinExistence type="inferred from homology"/>
<evidence type="ECO:0000255" key="1">
    <source>
        <dbReference type="HAMAP-Rule" id="MF_01023"/>
    </source>
</evidence>
<accession>A1S6Z2</accession>
<organism>
    <name type="scientific">Shewanella amazonensis (strain ATCC BAA-1098 / SB2B)</name>
    <dbReference type="NCBI Taxonomy" id="326297"/>
    <lineage>
        <taxon>Bacteria</taxon>
        <taxon>Pseudomonadati</taxon>
        <taxon>Pseudomonadota</taxon>
        <taxon>Gammaproteobacteria</taxon>
        <taxon>Alteromonadales</taxon>
        <taxon>Shewanellaceae</taxon>
        <taxon>Shewanella</taxon>
    </lineage>
</organism>
<dbReference type="EC" id="2.6.1.9" evidence="1"/>
<dbReference type="EMBL" id="CP000507">
    <property type="protein sequence ID" value="ABM00149.1"/>
    <property type="molecule type" value="Genomic_DNA"/>
</dbReference>
<dbReference type="RefSeq" id="WP_011760056.1">
    <property type="nucleotide sequence ID" value="NC_008700.1"/>
</dbReference>
<dbReference type="SMR" id="A1S6Z2"/>
<dbReference type="STRING" id="326297.Sama_1943"/>
<dbReference type="KEGG" id="saz:Sama_1943"/>
<dbReference type="eggNOG" id="COG0079">
    <property type="taxonomic scope" value="Bacteria"/>
</dbReference>
<dbReference type="HOGENOM" id="CLU_017584_3_1_6"/>
<dbReference type="OrthoDB" id="9813612at2"/>
<dbReference type="UniPathway" id="UPA00031">
    <property type="reaction ID" value="UER00012"/>
</dbReference>
<dbReference type="Proteomes" id="UP000009175">
    <property type="component" value="Chromosome"/>
</dbReference>
<dbReference type="GO" id="GO:0004400">
    <property type="term" value="F:histidinol-phosphate transaminase activity"/>
    <property type="evidence" value="ECO:0007669"/>
    <property type="project" value="UniProtKB-UniRule"/>
</dbReference>
<dbReference type="GO" id="GO:0030170">
    <property type="term" value="F:pyridoxal phosphate binding"/>
    <property type="evidence" value="ECO:0007669"/>
    <property type="project" value="InterPro"/>
</dbReference>
<dbReference type="GO" id="GO:0000105">
    <property type="term" value="P:L-histidine biosynthetic process"/>
    <property type="evidence" value="ECO:0007669"/>
    <property type="project" value="UniProtKB-UniRule"/>
</dbReference>
<dbReference type="CDD" id="cd00609">
    <property type="entry name" value="AAT_like"/>
    <property type="match status" value="1"/>
</dbReference>
<dbReference type="Gene3D" id="3.90.1150.10">
    <property type="entry name" value="Aspartate Aminotransferase, domain 1"/>
    <property type="match status" value="1"/>
</dbReference>
<dbReference type="Gene3D" id="3.40.640.10">
    <property type="entry name" value="Type I PLP-dependent aspartate aminotransferase-like (Major domain)"/>
    <property type="match status" value="1"/>
</dbReference>
<dbReference type="HAMAP" id="MF_01023">
    <property type="entry name" value="HisC_aminotrans_2"/>
    <property type="match status" value="1"/>
</dbReference>
<dbReference type="InterPro" id="IPR001917">
    <property type="entry name" value="Aminotrans_II_pyridoxalP_BS"/>
</dbReference>
<dbReference type="InterPro" id="IPR004839">
    <property type="entry name" value="Aminotransferase_I/II_large"/>
</dbReference>
<dbReference type="InterPro" id="IPR005861">
    <property type="entry name" value="HisP_aminotrans"/>
</dbReference>
<dbReference type="InterPro" id="IPR015424">
    <property type="entry name" value="PyrdxlP-dep_Trfase"/>
</dbReference>
<dbReference type="InterPro" id="IPR015421">
    <property type="entry name" value="PyrdxlP-dep_Trfase_major"/>
</dbReference>
<dbReference type="InterPro" id="IPR015422">
    <property type="entry name" value="PyrdxlP-dep_Trfase_small"/>
</dbReference>
<dbReference type="NCBIfam" id="TIGR01141">
    <property type="entry name" value="hisC"/>
    <property type="match status" value="1"/>
</dbReference>
<dbReference type="PANTHER" id="PTHR42885:SF2">
    <property type="entry name" value="HISTIDINOL-PHOSPHATE AMINOTRANSFERASE"/>
    <property type="match status" value="1"/>
</dbReference>
<dbReference type="PANTHER" id="PTHR42885">
    <property type="entry name" value="HISTIDINOL-PHOSPHATE AMINOTRANSFERASE-RELATED"/>
    <property type="match status" value="1"/>
</dbReference>
<dbReference type="Pfam" id="PF00155">
    <property type="entry name" value="Aminotran_1_2"/>
    <property type="match status" value="1"/>
</dbReference>
<dbReference type="SUPFAM" id="SSF53383">
    <property type="entry name" value="PLP-dependent transferases"/>
    <property type="match status" value="1"/>
</dbReference>
<dbReference type="PROSITE" id="PS00599">
    <property type="entry name" value="AA_TRANSFER_CLASS_2"/>
    <property type="match status" value="1"/>
</dbReference>
<feature type="chain" id="PRO_0000319787" description="Histidinol-phosphate aminotransferase">
    <location>
        <begin position="1"/>
        <end position="362"/>
    </location>
</feature>
<feature type="modified residue" description="N6-(pyridoxal phosphate)lysine" evidence="1">
    <location>
        <position position="222"/>
    </location>
</feature>
<keyword id="KW-0028">Amino-acid biosynthesis</keyword>
<keyword id="KW-0032">Aminotransferase</keyword>
<keyword id="KW-0368">Histidine biosynthesis</keyword>
<keyword id="KW-0663">Pyridoxal phosphate</keyword>
<keyword id="KW-1185">Reference proteome</keyword>
<keyword id="KW-0808">Transferase</keyword>
<name>HIS8_SHEAM</name>
<protein>
    <recommendedName>
        <fullName evidence="1">Histidinol-phosphate aminotransferase</fullName>
        <ecNumber evidence="1">2.6.1.9</ecNumber>
    </recommendedName>
    <alternativeName>
        <fullName evidence="1">Imidazole acetol-phosphate transaminase</fullName>
    </alternativeName>
</protein>